<proteinExistence type="evidence at protein level"/>
<sequence>MNFKYIIAVSFFIASAYARTEEKDVQSLSQRDVLEEESLREIRGIGGVLLSAGKAALKGLAKVLAEKYANGKRTAEDHEVMKRLEAVMRDLDSLDHPEEASERQTRGFNQEEIANLFTKKEKRILGPVLGLVGNALGGLIKKIG</sequence>
<protein>
    <recommendedName>
        <fullName>Maximins 4/H3 type 3</fullName>
    </recommendedName>
    <component>
        <recommendedName>
            <fullName>Maximin-4</fullName>
        </recommendedName>
    </component>
    <component>
        <recommendedName>
            <fullName>Maximin-H3</fullName>
        </recommendedName>
    </component>
</protein>
<name>M4H33_BOMMX</name>
<comment type="function">
    <text>Maximin-4 shows antibacterial activity against both Gram-positive and Gram-negative bacteria. It also shows antimicrobial activity against the fungus C.albicans, but not against A.flavus nor P.uticale. It has little hemolytic activity. It does not possess a significant cytotoxicity against tumor cell lines. It does not possess a significant anti-HIV activity.</text>
</comment>
<comment type="function">
    <text>Maximin-H3 shows antibacterial activity against both Gram-positive and Gram-negative bacteria. It also shows antimicrobial activity against the fungus C.albicans. Shows strong hemolytic activity.</text>
</comment>
<comment type="subcellular location">
    <subcellularLocation>
        <location evidence="4">Secreted</location>
    </subcellularLocation>
</comment>
<comment type="tissue specificity">
    <text evidence="4">Expressed by the skin glands.</text>
</comment>
<comment type="mass spectrometry">
    <molecule>Maximin-4</molecule>
</comment>
<comment type="mass spectrometry">
    <molecule>Maximin-H3</molecule>
</comment>
<comment type="similarity">
    <text evidence="5">Belongs to the bombinin family.</text>
</comment>
<reference key="1">
    <citation type="journal article" date="2005" name="Eur. J. Immunol.">
        <title>Variety of antimicrobial peptides in the Bombina maxima toad and evidence of their rapid diversification.</title>
        <authorList>
            <person name="Lee W.-H."/>
            <person name="Li Y."/>
            <person name="Lai R."/>
            <person name="Li S."/>
            <person name="Zhang Y."/>
            <person name="Wang W."/>
        </authorList>
    </citation>
    <scope>NUCLEOTIDE SEQUENCE [MRNA]</scope>
    <scope>AMIDATION AT ASN-70 AND ILE-143</scope>
    <source>
        <tissue>Skin</tissue>
    </source>
</reference>
<reference key="2">
    <citation type="submission" date="2001-07" db="UniProtKB">
        <title>Isolation and structural characterisation of antimicrobial peptides from the venom of the Chinese large-webbed bell toad (Bombina maxima).</title>
        <authorList>
            <person name="Chen T.B."/>
            <person name="McClean S."/>
            <person name="Orr D.F."/>
            <person name="Bjourson A.J."/>
            <person name="Rao P.F."/>
            <person name="Shaw C."/>
        </authorList>
    </citation>
    <scope>PROTEIN SEQUENCE OF 44-70</scope>
    <scope>FUNCTION OF MAXIMIN-4</scope>
    <scope>SUBCELLULAR LOCATION</scope>
    <scope>TISSUE SPECIFICITY</scope>
    <source>
        <tissue>Skin secretion</tissue>
    </source>
</reference>
<reference key="3">
    <citation type="journal article" date="2002" name="Peptides">
        <title>Antimicrobial peptides from skin secretions of Chinese red belly toad Bombina maxima.</title>
        <authorList>
            <person name="Lai R."/>
            <person name="Zheng Y.-T."/>
            <person name="Shen J.-H."/>
            <person name="Liu G.-J."/>
            <person name="Liu H."/>
            <person name="Lee W.-H."/>
            <person name="Tang S.-Z."/>
            <person name="Zhang Y."/>
        </authorList>
    </citation>
    <scope>PROTEIN SEQUENCE OF 44-70 AND 124-143</scope>
    <scope>AMIDATION AT ASN-70 AND ILE-143</scope>
    <scope>FUNCTION OF MAXIMIN-4 AND MAXIMIN-H3</scope>
    <scope>MASS SPECTROMETRY</scope>
    <source>
        <tissue>Skin</tissue>
        <tissue>Skin secretion</tissue>
    </source>
</reference>
<accession>Q58T52</accession>
<keyword id="KW-0002">3D-structure</keyword>
<keyword id="KW-0027">Amidation</keyword>
<keyword id="KW-0878">Amphibian defense peptide</keyword>
<keyword id="KW-0044">Antibiotic</keyword>
<keyword id="KW-0929">Antimicrobial</keyword>
<keyword id="KW-0165">Cleavage on pair of basic residues</keyword>
<keyword id="KW-0204">Cytolysis</keyword>
<keyword id="KW-0903">Direct protein sequencing</keyword>
<keyword id="KW-0295">Fungicide</keyword>
<keyword id="KW-0354">Hemolysis</keyword>
<keyword id="KW-0964">Secreted</keyword>
<keyword id="KW-0732">Signal</keyword>
<evidence type="ECO:0000255" key="1"/>
<evidence type="ECO:0000269" key="2">
    <source>
    </source>
</evidence>
<evidence type="ECO:0000269" key="3">
    <source>
    </source>
</evidence>
<evidence type="ECO:0000269" key="4">
    <source ref="2"/>
</evidence>
<evidence type="ECO:0000305" key="5"/>
<evidence type="ECO:0007829" key="6">
    <source>
        <dbReference type="PDB" id="2MHW"/>
    </source>
</evidence>
<feature type="signal peptide" evidence="1">
    <location>
        <begin position="1"/>
        <end position="18"/>
    </location>
</feature>
<feature type="propeptide" id="PRO_0000003160">
    <location>
        <begin position="19"/>
        <end position="43"/>
    </location>
</feature>
<feature type="peptide" id="PRO_0000003161" description="Maximin-4">
    <location>
        <begin position="44"/>
        <end position="70"/>
    </location>
</feature>
<feature type="propeptide" id="PRO_0000003162" evidence="2">
    <location>
        <begin position="74"/>
        <end position="123"/>
    </location>
</feature>
<feature type="peptide" id="PRO_0000003163" description="Maximin-H3">
    <location>
        <begin position="124"/>
        <end position="143"/>
    </location>
</feature>
<feature type="modified residue" description="Asparagine amide" evidence="2 3">
    <location>
        <position position="70"/>
    </location>
</feature>
<feature type="modified residue" description="Isoleucine amide" evidence="2 3">
    <location>
        <position position="143"/>
    </location>
</feature>
<feature type="strand" evidence="6">
    <location>
        <begin position="46"/>
        <end position="50"/>
    </location>
</feature>
<feature type="helix" evidence="6">
    <location>
        <begin position="51"/>
        <end position="58"/>
    </location>
</feature>
<feature type="helix" evidence="6">
    <location>
        <begin position="61"/>
        <end position="67"/>
    </location>
</feature>
<organism>
    <name type="scientific">Bombina maxima</name>
    <name type="common">Giant fire-bellied toad</name>
    <name type="synonym">Chinese red belly toad</name>
    <dbReference type="NCBI Taxonomy" id="161274"/>
    <lineage>
        <taxon>Eukaryota</taxon>
        <taxon>Metazoa</taxon>
        <taxon>Chordata</taxon>
        <taxon>Craniata</taxon>
        <taxon>Vertebrata</taxon>
        <taxon>Euteleostomi</taxon>
        <taxon>Amphibia</taxon>
        <taxon>Batrachia</taxon>
        <taxon>Anura</taxon>
        <taxon>Bombinatoridae</taxon>
        <taxon>Bombina</taxon>
    </lineage>
</organism>
<dbReference type="EMBL" id="AY849008">
    <property type="protein sequence ID" value="AAX50229.1"/>
    <property type="molecule type" value="mRNA"/>
</dbReference>
<dbReference type="PDB" id="2MHW">
    <property type="method" value="NMR"/>
    <property type="chains" value="A=44-70"/>
</dbReference>
<dbReference type="PDBsum" id="2MHW"/>
<dbReference type="SMR" id="Q58T52"/>
<dbReference type="EvolutionaryTrace" id="Q58T52"/>
<dbReference type="GO" id="GO:0005576">
    <property type="term" value="C:extracellular region"/>
    <property type="evidence" value="ECO:0007669"/>
    <property type="project" value="UniProtKB-SubCell"/>
</dbReference>
<dbReference type="GO" id="GO:0042742">
    <property type="term" value="P:defense response to bacterium"/>
    <property type="evidence" value="ECO:0007669"/>
    <property type="project" value="UniProtKB-KW"/>
</dbReference>
<dbReference type="GO" id="GO:0050832">
    <property type="term" value="P:defense response to fungus"/>
    <property type="evidence" value="ECO:0007669"/>
    <property type="project" value="UniProtKB-KW"/>
</dbReference>
<dbReference type="GO" id="GO:0031640">
    <property type="term" value="P:killing of cells of another organism"/>
    <property type="evidence" value="ECO:0007669"/>
    <property type="project" value="UniProtKB-KW"/>
</dbReference>
<dbReference type="InterPro" id="IPR007962">
    <property type="entry name" value="Bombinin"/>
</dbReference>
<dbReference type="Pfam" id="PF05298">
    <property type="entry name" value="Bombinin"/>
    <property type="match status" value="1"/>
</dbReference>